<gene>
    <name evidence="1" type="primary">glmM</name>
    <name type="ordered locus">TC_0202</name>
</gene>
<reference key="1">
    <citation type="journal article" date="2000" name="Nucleic Acids Res.">
        <title>Genome sequences of Chlamydia trachomatis MoPn and Chlamydia pneumoniae AR39.</title>
        <authorList>
            <person name="Read T.D."/>
            <person name="Brunham R.C."/>
            <person name="Shen C."/>
            <person name="Gill S.R."/>
            <person name="Heidelberg J.F."/>
            <person name="White O."/>
            <person name="Hickey E.K."/>
            <person name="Peterson J.D."/>
            <person name="Utterback T.R."/>
            <person name="Berry K.J."/>
            <person name="Bass S."/>
            <person name="Linher K.D."/>
            <person name="Weidman J.F."/>
            <person name="Khouri H.M."/>
            <person name="Craven B."/>
            <person name="Bowman C."/>
            <person name="Dodson R.J."/>
            <person name="Gwinn M.L."/>
            <person name="Nelson W.C."/>
            <person name="DeBoy R.T."/>
            <person name="Kolonay J.F."/>
            <person name="McClarty G."/>
            <person name="Salzberg S.L."/>
            <person name="Eisen J.A."/>
            <person name="Fraser C.M."/>
        </authorList>
    </citation>
    <scope>NUCLEOTIDE SEQUENCE [LARGE SCALE GENOMIC DNA]</scope>
    <source>
        <strain>MoPn / Nigg</strain>
    </source>
</reference>
<protein>
    <recommendedName>
        <fullName evidence="1">Phosphoglucosamine mutase</fullName>
        <ecNumber evidence="1">5.4.2.10</ecNumber>
    </recommendedName>
</protein>
<sequence length="459" mass="49436">MTCDVSPLFGTDGIRGRANFEPMTVETSVLLGKAVAGVLLERHSGKHRVVVGKDTRLSGYMFENALIAGLTSMGIETLMLGPIPTPGVAFITRAYRADAGIMISASHNPYRDNGIKIFSSDGFKIGQAVEERIEAMIASKSFGGLPEDHAVGKNKRVKDAMGRYIEYAKATFPKGRTLKGLRIVLDCAHGAAYRVAPSVFEELDAEVICYGCEPSGCNINEGCGALWPSIIQKAVIEHEADVGIALDGDGDRLIMVDEKGHIVDGDMLLSICASDLKRRQALPENRVVATVMTNFGVLRYLESLGIQVTISPVGDRHVLQHMLETKAILGGEQSGHMIFLDYNTTGDGIVSALQVLRIMIESESTLSDLTACIVKSPQSLINVPVAKKVPLDSLSNVQVVLQEVKEILGDSGRILLRYSGTENICRVMVEGTKKHQVDSLAKTIVDVVEAEIGGAEISE</sequence>
<dbReference type="EC" id="5.4.2.10" evidence="1"/>
<dbReference type="EMBL" id="AE002160">
    <property type="protein sequence ID" value="AAF39074.1"/>
    <property type="molecule type" value="Genomic_DNA"/>
</dbReference>
<dbReference type="PIR" id="A81729">
    <property type="entry name" value="A81729"/>
</dbReference>
<dbReference type="RefSeq" id="WP_010229802.1">
    <property type="nucleotide sequence ID" value="NZ_CP063055.1"/>
</dbReference>
<dbReference type="SMR" id="Q9PLA5"/>
<dbReference type="GeneID" id="1246328"/>
<dbReference type="KEGG" id="cmu:TC_0202"/>
<dbReference type="eggNOG" id="COG1109">
    <property type="taxonomic scope" value="Bacteria"/>
</dbReference>
<dbReference type="HOGENOM" id="CLU_016950_7_0_0"/>
<dbReference type="OrthoDB" id="9806956at2"/>
<dbReference type="Proteomes" id="UP000000800">
    <property type="component" value="Chromosome"/>
</dbReference>
<dbReference type="GO" id="GO:0005829">
    <property type="term" value="C:cytosol"/>
    <property type="evidence" value="ECO:0007669"/>
    <property type="project" value="TreeGrafter"/>
</dbReference>
<dbReference type="GO" id="GO:0000287">
    <property type="term" value="F:magnesium ion binding"/>
    <property type="evidence" value="ECO:0007669"/>
    <property type="project" value="UniProtKB-UniRule"/>
</dbReference>
<dbReference type="GO" id="GO:0008966">
    <property type="term" value="F:phosphoglucosamine mutase activity"/>
    <property type="evidence" value="ECO:0007669"/>
    <property type="project" value="UniProtKB-UniRule"/>
</dbReference>
<dbReference type="GO" id="GO:0004615">
    <property type="term" value="F:phosphomannomutase activity"/>
    <property type="evidence" value="ECO:0007669"/>
    <property type="project" value="TreeGrafter"/>
</dbReference>
<dbReference type="GO" id="GO:0005975">
    <property type="term" value="P:carbohydrate metabolic process"/>
    <property type="evidence" value="ECO:0007669"/>
    <property type="project" value="InterPro"/>
</dbReference>
<dbReference type="GO" id="GO:0009252">
    <property type="term" value="P:peptidoglycan biosynthetic process"/>
    <property type="evidence" value="ECO:0007669"/>
    <property type="project" value="TreeGrafter"/>
</dbReference>
<dbReference type="GO" id="GO:0006048">
    <property type="term" value="P:UDP-N-acetylglucosamine biosynthetic process"/>
    <property type="evidence" value="ECO:0007669"/>
    <property type="project" value="TreeGrafter"/>
</dbReference>
<dbReference type="CDD" id="cd05802">
    <property type="entry name" value="GlmM"/>
    <property type="match status" value="1"/>
</dbReference>
<dbReference type="FunFam" id="3.30.310.50:FF:000001">
    <property type="entry name" value="Phosphoglucosamine mutase"/>
    <property type="match status" value="1"/>
</dbReference>
<dbReference type="FunFam" id="3.40.120.10:FF:000001">
    <property type="entry name" value="Phosphoglucosamine mutase"/>
    <property type="match status" value="1"/>
</dbReference>
<dbReference type="FunFam" id="3.40.120.10:FF:000003">
    <property type="entry name" value="Phosphoglucosamine mutase"/>
    <property type="match status" value="1"/>
</dbReference>
<dbReference type="Gene3D" id="3.40.120.10">
    <property type="entry name" value="Alpha-D-Glucose-1,6-Bisphosphate, subunit A, domain 3"/>
    <property type="match status" value="3"/>
</dbReference>
<dbReference type="Gene3D" id="3.30.310.50">
    <property type="entry name" value="Alpha-D-phosphohexomutase, C-terminal domain"/>
    <property type="match status" value="1"/>
</dbReference>
<dbReference type="HAMAP" id="MF_01554_B">
    <property type="entry name" value="GlmM_B"/>
    <property type="match status" value="1"/>
</dbReference>
<dbReference type="InterPro" id="IPR005844">
    <property type="entry name" value="A-D-PHexomutase_a/b/a-I"/>
</dbReference>
<dbReference type="InterPro" id="IPR016055">
    <property type="entry name" value="A-D-PHexomutase_a/b/a-I/II/III"/>
</dbReference>
<dbReference type="InterPro" id="IPR005845">
    <property type="entry name" value="A-D-PHexomutase_a/b/a-II"/>
</dbReference>
<dbReference type="InterPro" id="IPR005846">
    <property type="entry name" value="A-D-PHexomutase_a/b/a-III"/>
</dbReference>
<dbReference type="InterPro" id="IPR005843">
    <property type="entry name" value="A-D-PHexomutase_C"/>
</dbReference>
<dbReference type="InterPro" id="IPR036900">
    <property type="entry name" value="A-D-PHexomutase_C_sf"/>
</dbReference>
<dbReference type="InterPro" id="IPR016066">
    <property type="entry name" value="A-D-PHexomutase_CS"/>
</dbReference>
<dbReference type="InterPro" id="IPR005841">
    <property type="entry name" value="Alpha-D-phosphohexomutase_SF"/>
</dbReference>
<dbReference type="InterPro" id="IPR006352">
    <property type="entry name" value="GlmM_bact"/>
</dbReference>
<dbReference type="InterPro" id="IPR050060">
    <property type="entry name" value="Phosphoglucosamine_mutase"/>
</dbReference>
<dbReference type="NCBIfam" id="TIGR01455">
    <property type="entry name" value="glmM"/>
    <property type="match status" value="1"/>
</dbReference>
<dbReference type="NCBIfam" id="NF008139">
    <property type="entry name" value="PRK10887.1"/>
    <property type="match status" value="1"/>
</dbReference>
<dbReference type="PANTHER" id="PTHR42946:SF1">
    <property type="entry name" value="PHOSPHOGLUCOMUTASE (ALPHA-D-GLUCOSE-1,6-BISPHOSPHATE-DEPENDENT)"/>
    <property type="match status" value="1"/>
</dbReference>
<dbReference type="PANTHER" id="PTHR42946">
    <property type="entry name" value="PHOSPHOHEXOSE MUTASE"/>
    <property type="match status" value="1"/>
</dbReference>
<dbReference type="Pfam" id="PF02878">
    <property type="entry name" value="PGM_PMM_I"/>
    <property type="match status" value="1"/>
</dbReference>
<dbReference type="Pfam" id="PF02879">
    <property type="entry name" value="PGM_PMM_II"/>
    <property type="match status" value="1"/>
</dbReference>
<dbReference type="Pfam" id="PF02880">
    <property type="entry name" value="PGM_PMM_III"/>
    <property type="match status" value="1"/>
</dbReference>
<dbReference type="Pfam" id="PF00408">
    <property type="entry name" value="PGM_PMM_IV"/>
    <property type="match status" value="1"/>
</dbReference>
<dbReference type="PRINTS" id="PR00509">
    <property type="entry name" value="PGMPMM"/>
</dbReference>
<dbReference type="SUPFAM" id="SSF55957">
    <property type="entry name" value="Phosphoglucomutase, C-terminal domain"/>
    <property type="match status" value="1"/>
</dbReference>
<dbReference type="SUPFAM" id="SSF53738">
    <property type="entry name" value="Phosphoglucomutase, first 3 domains"/>
    <property type="match status" value="3"/>
</dbReference>
<dbReference type="PROSITE" id="PS00710">
    <property type="entry name" value="PGM_PMM"/>
    <property type="match status" value="1"/>
</dbReference>
<evidence type="ECO:0000255" key="1">
    <source>
        <dbReference type="HAMAP-Rule" id="MF_01554"/>
    </source>
</evidence>
<organism>
    <name type="scientific">Chlamydia muridarum (strain MoPn / Nigg)</name>
    <dbReference type="NCBI Taxonomy" id="243161"/>
    <lineage>
        <taxon>Bacteria</taxon>
        <taxon>Pseudomonadati</taxon>
        <taxon>Chlamydiota</taxon>
        <taxon>Chlamydiia</taxon>
        <taxon>Chlamydiales</taxon>
        <taxon>Chlamydiaceae</taxon>
        <taxon>Chlamydia/Chlamydophila group</taxon>
        <taxon>Chlamydia</taxon>
    </lineage>
</organism>
<feature type="chain" id="PRO_0000147867" description="Phosphoglucosamine mutase">
    <location>
        <begin position="1"/>
        <end position="459"/>
    </location>
</feature>
<feature type="active site" description="Phosphoserine intermediate" evidence="1">
    <location>
        <position position="106"/>
    </location>
</feature>
<feature type="binding site" description="via phosphate group" evidence="1">
    <location>
        <position position="106"/>
    </location>
    <ligand>
        <name>Mg(2+)</name>
        <dbReference type="ChEBI" id="CHEBI:18420"/>
    </ligand>
</feature>
<feature type="binding site" evidence="1">
    <location>
        <position position="247"/>
    </location>
    <ligand>
        <name>Mg(2+)</name>
        <dbReference type="ChEBI" id="CHEBI:18420"/>
    </ligand>
</feature>
<feature type="binding site" evidence="1">
    <location>
        <position position="249"/>
    </location>
    <ligand>
        <name>Mg(2+)</name>
        <dbReference type="ChEBI" id="CHEBI:18420"/>
    </ligand>
</feature>
<feature type="binding site" evidence="1">
    <location>
        <position position="251"/>
    </location>
    <ligand>
        <name>Mg(2+)</name>
        <dbReference type="ChEBI" id="CHEBI:18420"/>
    </ligand>
</feature>
<feature type="modified residue" description="Phosphoserine" evidence="1">
    <location>
        <position position="106"/>
    </location>
</feature>
<keyword id="KW-0413">Isomerase</keyword>
<keyword id="KW-0460">Magnesium</keyword>
<keyword id="KW-0479">Metal-binding</keyword>
<keyword id="KW-0597">Phosphoprotein</keyword>
<accession>Q9PLA5</accession>
<name>GLMM_CHLMU</name>
<comment type="function">
    <text evidence="1">Catalyzes the conversion of glucosamine-6-phosphate to glucosamine-1-phosphate.</text>
</comment>
<comment type="catalytic activity">
    <reaction evidence="1">
        <text>alpha-D-glucosamine 1-phosphate = D-glucosamine 6-phosphate</text>
        <dbReference type="Rhea" id="RHEA:23424"/>
        <dbReference type="ChEBI" id="CHEBI:58516"/>
        <dbReference type="ChEBI" id="CHEBI:58725"/>
        <dbReference type="EC" id="5.4.2.10"/>
    </reaction>
</comment>
<comment type="cofactor">
    <cofactor evidence="1">
        <name>Mg(2+)</name>
        <dbReference type="ChEBI" id="CHEBI:18420"/>
    </cofactor>
    <text evidence="1">Binds 1 Mg(2+) ion per subunit.</text>
</comment>
<comment type="PTM">
    <text evidence="1">Activated by phosphorylation.</text>
</comment>
<comment type="similarity">
    <text evidence="1">Belongs to the phosphohexose mutase family.</text>
</comment>
<proteinExistence type="inferred from homology"/>